<evidence type="ECO:0000250" key="1"/>
<evidence type="ECO:0000255" key="2"/>
<evidence type="ECO:0000305" key="3"/>
<protein>
    <recommendedName>
        <fullName>Thymidylate kinase</fullName>
        <ecNumber>2.7.4.9</ecNumber>
    </recommendedName>
    <alternativeName>
        <fullName>dTMP kinase</fullName>
    </alternativeName>
</protein>
<proteinExistence type="inferred from homology"/>
<sequence>MSQGLFITLEGPEGAGKTTQLARLEARLRAAGHAVTVTREPGGTPLGTRVREVVLDPAVEIEPLGEFLLYSASRAQLVREVLRPALERGETVLCDRYADSSLAYQGAGRGLSLPLLRQITAEVTGGLTPGLTVLLDLDPALGLQRAARRGQPDRLEQADLTFHRRVRQGFLDLAHAEPQRFLVLDATRPEDELEAEIWAAVSERGH</sequence>
<organism>
    <name type="scientific">Deinococcus radiodurans (strain ATCC 13939 / DSM 20539 / JCM 16871 / CCUG 27074 / LMG 4051 / NBRC 15346 / NCIMB 9279 / VKM B-1422 / R1)</name>
    <dbReference type="NCBI Taxonomy" id="243230"/>
    <lineage>
        <taxon>Bacteria</taxon>
        <taxon>Thermotogati</taxon>
        <taxon>Deinococcota</taxon>
        <taxon>Deinococci</taxon>
        <taxon>Deinococcales</taxon>
        <taxon>Deinococcaceae</taxon>
        <taxon>Deinococcus</taxon>
    </lineage>
</organism>
<gene>
    <name type="primary">tmk</name>
    <name type="ordered locus">DR_0111</name>
</gene>
<name>KTHY_DEIRA</name>
<feature type="chain" id="PRO_0000155266" description="Thymidylate kinase">
    <location>
        <begin position="1"/>
        <end position="206"/>
    </location>
</feature>
<feature type="binding site" evidence="2">
    <location>
        <begin position="11"/>
        <end position="18"/>
    </location>
    <ligand>
        <name>ATP</name>
        <dbReference type="ChEBI" id="CHEBI:30616"/>
    </ligand>
</feature>
<comment type="function">
    <text evidence="1">Phosphorylation of dTMP to form dTDP in both de novo and salvage pathways of dTTP synthesis.</text>
</comment>
<comment type="catalytic activity">
    <reaction>
        <text>dTMP + ATP = dTDP + ADP</text>
        <dbReference type="Rhea" id="RHEA:13517"/>
        <dbReference type="ChEBI" id="CHEBI:30616"/>
        <dbReference type="ChEBI" id="CHEBI:58369"/>
        <dbReference type="ChEBI" id="CHEBI:63528"/>
        <dbReference type="ChEBI" id="CHEBI:456216"/>
        <dbReference type="EC" id="2.7.4.9"/>
    </reaction>
</comment>
<comment type="similarity">
    <text evidence="3">Belongs to the thymidylate kinase family.</text>
</comment>
<dbReference type="EC" id="2.7.4.9"/>
<dbReference type="EMBL" id="AE000513">
    <property type="protein sequence ID" value="AAF09698.1"/>
    <property type="molecule type" value="Genomic_DNA"/>
</dbReference>
<dbReference type="PIR" id="D75560">
    <property type="entry name" value="D75560"/>
</dbReference>
<dbReference type="RefSeq" id="NP_293837.1">
    <property type="nucleotide sequence ID" value="NC_001263.1"/>
</dbReference>
<dbReference type="RefSeq" id="WP_010886759.1">
    <property type="nucleotide sequence ID" value="NC_001263.1"/>
</dbReference>
<dbReference type="SMR" id="Q9RY40"/>
<dbReference type="FunCoup" id="Q9RY40">
    <property type="interactions" value="315"/>
</dbReference>
<dbReference type="STRING" id="243230.DR_0111"/>
<dbReference type="PaxDb" id="243230-DR_0111"/>
<dbReference type="EnsemblBacteria" id="AAF09698">
    <property type="protein sequence ID" value="AAF09698"/>
    <property type="gene ID" value="DR_0111"/>
</dbReference>
<dbReference type="GeneID" id="69516341"/>
<dbReference type="KEGG" id="dra:DR_0111"/>
<dbReference type="PATRIC" id="fig|243230.17.peg.276"/>
<dbReference type="eggNOG" id="COG0125">
    <property type="taxonomic scope" value="Bacteria"/>
</dbReference>
<dbReference type="HOGENOM" id="CLU_049131_0_2_0"/>
<dbReference type="InParanoid" id="Q9RY40"/>
<dbReference type="OrthoDB" id="9774907at2"/>
<dbReference type="Proteomes" id="UP000002524">
    <property type="component" value="Chromosome 1"/>
</dbReference>
<dbReference type="GO" id="GO:0005737">
    <property type="term" value="C:cytoplasm"/>
    <property type="evidence" value="ECO:0000318"/>
    <property type="project" value="GO_Central"/>
</dbReference>
<dbReference type="GO" id="GO:0005829">
    <property type="term" value="C:cytosol"/>
    <property type="evidence" value="ECO:0000318"/>
    <property type="project" value="GO_Central"/>
</dbReference>
<dbReference type="GO" id="GO:0005524">
    <property type="term" value="F:ATP binding"/>
    <property type="evidence" value="ECO:0007669"/>
    <property type="project" value="UniProtKB-UniRule"/>
</dbReference>
<dbReference type="GO" id="GO:0004798">
    <property type="term" value="F:dTMP kinase activity"/>
    <property type="evidence" value="ECO:0000318"/>
    <property type="project" value="GO_Central"/>
</dbReference>
<dbReference type="GO" id="GO:0006233">
    <property type="term" value="P:dTDP biosynthetic process"/>
    <property type="evidence" value="ECO:0000318"/>
    <property type="project" value="GO_Central"/>
</dbReference>
<dbReference type="GO" id="GO:0006235">
    <property type="term" value="P:dTTP biosynthetic process"/>
    <property type="evidence" value="ECO:0000318"/>
    <property type="project" value="GO_Central"/>
</dbReference>
<dbReference type="GO" id="GO:0006227">
    <property type="term" value="P:dUDP biosynthetic process"/>
    <property type="evidence" value="ECO:0000318"/>
    <property type="project" value="GO_Central"/>
</dbReference>
<dbReference type="CDD" id="cd01672">
    <property type="entry name" value="TMPK"/>
    <property type="match status" value="1"/>
</dbReference>
<dbReference type="FunFam" id="3.40.50.300:FF:000225">
    <property type="entry name" value="Thymidylate kinase"/>
    <property type="match status" value="1"/>
</dbReference>
<dbReference type="Gene3D" id="3.40.50.300">
    <property type="entry name" value="P-loop containing nucleotide triphosphate hydrolases"/>
    <property type="match status" value="1"/>
</dbReference>
<dbReference type="HAMAP" id="MF_00165">
    <property type="entry name" value="Thymidylate_kinase"/>
    <property type="match status" value="1"/>
</dbReference>
<dbReference type="InterPro" id="IPR027417">
    <property type="entry name" value="P-loop_NTPase"/>
</dbReference>
<dbReference type="InterPro" id="IPR039430">
    <property type="entry name" value="Thymidylate_kin-like_dom"/>
</dbReference>
<dbReference type="InterPro" id="IPR018095">
    <property type="entry name" value="Thymidylate_kin_CS"/>
</dbReference>
<dbReference type="InterPro" id="IPR018094">
    <property type="entry name" value="Thymidylate_kinase"/>
</dbReference>
<dbReference type="NCBIfam" id="TIGR00041">
    <property type="entry name" value="DTMP_kinase"/>
    <property type="match status" value="1"/>
</dbReference>
<dbReference type="PANTHER" id="PTHR10344">
    <property type="entry name" value="THYMIDYLATE KINASE"/>
    <property type="match status" value="1"/>
</dbReference>
<dbReference type="PANTHER" id="PTHR10344:SF4">
    <property type="entry name" value="UMP-CMP KINASE 2, MITOCHONDRIAL"/>
    <property type="match status" value="1"/>
</dbReference>
<dbReference type="Pfam" id="PF02223">
    <property type="entry name" value="Thymidylate_kin"/>
    <property type="match status" value="1"/>
</dbReference>
<dbReference type="SUPFAM" id="SSF52540">
    <property type="entry name" value="P-loop containing nucleoside triphosphate hydrolases"/>
    <property type="match status" value="1"/>
</dbReference>
<dbReference type="PROSITE" id="PS01331">
    <property type="entry name" value="THYMIDYLATE_KINASE"/>
    <property type="match status" value="1"/>
</dbReference>
<accession>Q9RY40</accession>
<reference key="1">
    <citation type="journal article" date="1999" name="Science">
        <title>Genome sequence of the radioresistant bacterium Deinococcus radiodurans R1.</title>
        <authorList>
            <person name="White O."/>
            <person name="Eisen J.A."/>
            <person name="Heidelberg J.F."/>
            <person name="Hickey E.K."/>
            <person name="Peterson J.D."/>
            <person name="Dodson R.J."/>
            <person name="Haft D.H."/>
            <person name="Gwinn M.L."/>
            <person name="Nelson W.C."/>
            <person name="Richardson D.L."/>
            <person name="Moffat K.S."/>
            <person name="Qin H."/>
            <person name="Jiang L."/>
            <person name="Pamphile W."/>
            <person name="Crosby M."/>
            <person name="Shen M."/>
            <person name="Vamathevan J.J."/>
            <person name="Lam P."/>
            <person name="McDonald L.A."/>
            <person name="Utterback T.R."/>
            <person name="Zalewski C."/>
            <person name="Makarova K.S."/>
            <person name="Aravind L."/>
            <person name="Daly M.J."/>
            <person name="Minton K.W."/>
            <person name="Fleischmann R.D."/>
            <person name="Ketchum K.A."/>
            <person name="Nelson K.E."/>
            <person name="Salzberg S.L."/>
            <person name="Smith H.O."/>
            <person name="Venter J.C."/>
            <person name="Fraser C.M."/>
        </authorList>
    </citation>
    <scope>NUCLEOTIDE SEQUENCE [LARGE SCALE GENOMIC DNA]</scope>
    <source>
        <strain>ATCC 13939 / DSM 20539 / JCM 16871 / CCUG 27074 / LMG 4051 / NBRC 15346 / NCIMB 9279 / VKM B-1422 / R1</strain>
    </source>
</reference>
<keyword id="KW-0067">ATP-binding</keyword>
<keyword id="KW-0418">Kinase</keyword>
<keyword id="KW-0545">Nucleotide biosynthesis</keyword>
<keyword id="KW-0547">Nucleotide-binding</keyword>
<keyword id="KW-1185">Reference proteome</keyword>
<keyword id="KW-0808">Transferase</keyword>